<name>EFG1_BORA1</name>
<comment type="function">
    <text evidence="1">Catalyzes the GTP-dependent ribosomal translocation step during translation elongation. During this step, the ribosome changes from the pre-translocational (PRE) to the post-translocational (POST) state as the newly formed A-site-bound peptidyl-tRNA and P-site-bound deacylated tRNA move to the P and E sites, respectively. Catalyzes the coordinated movement of the two tRNA molecules, the mRNA and conformational changes in the ribosome.</text>
</comment>
<comment type="subcellular location">
    <subcellularLocation>
        <location evidence="1">Cytoplasm</location>
    </subcellularLocation>
</comment>
<comment type="similarity">
    <text evidence="1">Belongs to the TRAFAC class translation factor GTPase superfamily. Classic translation factor GTPase family. EF-G/EF-2 subfamily.</text>
</comment>
<dbReference type="EMBL" id="AM167904">
    <property type="protein sequence ID" value="CAJ47606.1"/>
    <property type="molecule type" value="Genomic_DNA"/>
</dbReference>
<dbReference type="RefSeq" id="WP_012415732.1">
    <property type="nucleotide sequence ID" value="NC_010645.1"/>
</dbReference>
<dbReference type="SMR" id="Q2L2H1"/>
<dbReference type="STRING" id="360910.BAV0022"/>
<dbReference type="GeneID" id="92936733"/>
<dbReference type="KEGG" id="bav:BAV0022"/>
<dbReference type="eggNOG" id="COG0480">
    <property type="taxonomic scope" value="Bacteria"/>
</dbReference>
<dbReference type="HOGENOM" id="CLU_002794_4_1_4"/>
<dbReference type="OrthoDB" id="9804431at2"/>
<dbReference type="Proteomes" id="UP000001977">
    <property type="component" value="Chromosome"/>
</dbReference>
<dbReference type="GO" id="GO:0005737">
    <property type="term" value="C:cytoplasm"/>
    <property type="evidence" value="ECO:0007669"/>
    <property type="project" value="UniProtKB-SubCell"/>
</dbReference>
<dbReference type="GO" id="GO:0005525">
    <property type="term" value="F:GTP binding"/>
    <property type="evidence" value="ECO:0007669"/>
    <property type="project" value="UniProtKB-UniRule"/>
</dbReference>
<dbReference type="GO" id="GO:0003924">
    <property type="term" value="F:GTPase activity"/>
    <property type="evidence" value="ECO:0007669"/>
    <property type="project" value="InterPro"/>
</dbReference>
<dbReference type="GO" id="GO:0097216">
    <property type="term" value="F:guanosine tetraphosphate binding"/>
    <property type="evidence" value="ECO:0007669"/>
    <property type="project" value="UniProtKB-ARBA"/>
</dbReference>
<dbReference type="GO" id="GO:0003746">
    <property type="term" value="F:translation elongation factor activity"/>
    <property type="evidence" value="ECO:0007669"/>
    <property type="project" value="UniProtKB-UniRule"/>
</dbReference>
<dbReference type="GO" id="GO:0032790">
    <property type="term" value="P:ribosome disassembly"/>
    <property type="evidence" value="ECO:0007669"/>
    <property type="project" value="TreeGrafter"/>
</dbReference>
<dbReference type="CDD" id="cd01886">
    <property type="entry name" value="EF-G"/>
    <property type="match status" value="1"/>
</dbReference>
<dbReference type="CDD" id="cd16262">
    <property type="entry name" value="EFG_III"/>
    <property type="match status" value="1"/>
</dbReference>
<dbReference type="CDD" id="cd01434">
    <property type="entry name" value="EFG_mtEFG1_IV"/>
    <property type="match status" value="1"/>
</dbReference>
<dbReference type="CDD" id="cd03713">
    <property type="entry name" value="EFG_mtEFG_C"/>
    <property type="match status" value="1"/>
</dbReference>
<dbReference type="CDD" id="cd04088">
    <property type="entry name" value="EFG_mtEFG_II"/>
    <property type="match status" value="1"/>
</dbReference>
<dbReference type="FunFam" id="2.40.30.10:FF:000006">
    <property type="entry name" value="Elongation factor G"/>
    <property type="match status" value="1"/>
</dbReference>
<dbReference type="FunFam" id="3.30.230.10:FF:000003">
    <property type="entry name" value="Elongation factor G"/>
    <property type="match status" value="1"/>
</dbReference>
<dbReference type="FunFam" id="3.30.70.240:FF:000001">
    <property type="entry name" value="Elongation factor G"/>
    <property type="match status" value="1"/>
</dbReference>
<dbReference type="FunFam" id="3.30.70.870:FF:000001">
    <property type="entry name" value="Elongation factor G"/>
    <property type="match status" value="1"/>
</dbReference>
<dbReference type="FunFam" id="3.40.50.300:FF:000029">
    <property type="entry name" value="Elongation factor G"/>
    <property type="match status" value="1"/>
</dbReference>
<dbReference type="Gene3D" id="3.30.230.10">
    <property type="match status" value="1"/>
</dbReference>
<dbReference type="Gene3D" id="3.30.70.240">
    <property type="match status" value="1"/>
</dbReference>
<dbReference type="Gene3D" id="3.30.70.870">
    <property type="entry name" value="Elongation Factor G (Translational Gtpase), domain 3"/>
    <property type="match status" value="1"/>
</dbReference>
<dbReference type="Gene3D" id="3.40.50.300">
    <property type="entry name" value="P-loop containing nucleotide triphosphate hydrolases"/>
    <property type="match status" value="1"/>
</dbReference>
<dbReference type="Gene3D" id="2.40.30.10">
    <property type="entry name" value="Translation factors"/>
    <property type="match status" value="1"/>
</dbReference>
<dbReference type="HAMAP" id="MF_00054_B">
    <property type="entry name" value="EF_G_EF_2_B"/>
    <property type="match status" value="1"/>
</dbReference>
<dbReference type="InterPro" id="IPR041095">
    <property type="entry name" value="EFG_II"/>
</dbReference>
<dbReference type="InterPro" id="IPR009022">
    <property type="entry name" value="EFG_III"/>
</dbReference>
<dbReference type="InterPro" id="IPR035647">
    <property type="entry name" value="EFG_III/V"/>
</dbReference>
<dbReference type="InterPro" id="IPR047872">
    <property type="entry name" value="EFG_IV"/>
</dbReference>
<dbReference type="InterPro" id="IPR035649">
    <property type="entry name" value="EFG_V"/>
</dbReference>
<dbReference type="InterPro" id="IPR000640">
    <property type="entry name" value="EFG_V-like"/>
</dbReference>
<dbReference type="InterPro" id="IPR004161">
    <property type="entry name" value="EFTu-like_2"/>
</dbReference>
<dbReference type="InterPro" id="IPR031157">
    <property type="entry name" value="G_TR_CS"/>
</dbReference>
<dbReference type="InterPro" id="IPR027417">
    <property type="entry name" value="P-loop_NTPase"/>
</dbReference>
<dbReference type="InterPro" id="IPR020568">
    <property type="entry name" value="Ribosomal_Su5_D2-typ_SF"/>
</dbReference>
<dbReference type="InterPro" id="IPR014721">
    <property type="entry name" value="Ribsml_uS5_D2-typ_fold_subgr"/>
</dbReference>
<dbReference type="InterPro" id="IPR005225">
    <property type="entry name" value="Small_GTP-bd"/>
</dbReference>
<dbReference type="InterPro" id="IPR000795">
    <property type="entry name" value="T_Tr_GTP-bd_dom"/>
</dbReference>
<dbReference type="InterPro" id="IPR009000">
    <property type="entry name" value="Transl_B-barrel_sf"/>
</dbReference>
<dbReference type="InterPro" id="IPR004540">
    <property type="entry name" value="Transl_elong_EFG/EF2"/>
</dbReference>
<dbReference type="InterPro" id="IPR005517">
    <property type="entry name" value="Transl_elong_EFG/EF2_IV"/>
</dbReference>
<dbReference type="NCBIfam" id="TIGR00484">
    <property type="entry name" value="EF-G"/>
    <property type="match status" value="1"/>
</dbReference>
<dbReference type="NCBIfam" id="NF009379">
    <property type="entry name" value="PRK12740.1-3"/>
    <property type="match status" value="1"/>
</dbReference>
<dbReference type="NCBIfam" id="NF009381">
    <property type="entry name" value="PRK12740.1-5"/>
    <property type="match status" value="1"/>
</dbReference>
<dbReference type="NCBIfam" id="TIGR00231">
    <property type="entry name" value="small_GTP"/>
    <property type="match status" value="1"/>
</dbReference>
<dbReference type="PANTHER" id="PTHR43261:SF1">
    <property type="entry name" value="RIBOSOME-RELEASING FACTOR 2, MITOCHONDRIAL"/>
    <property type="match status" value="1"/>
</dbReference>
<dbReference type="PANTHER" id="PTHR43261">
    <property type="entry name" value="TRANSLATION ELONGATION FACTOR G-RELATED"/>
    <property type="match status" value="1"/>
</dbReference>
<dbReference type="Pfam" id="PF00679">
    <property type="entry name" value="EFG_C"/>
    <property type="match status" value="1"/>
</dbReference>
<dbReference type="Pfam" id="PF14492">
    <property type="entry name" value="EFG_III"/>
    <property type="match status" value="1"/>
</dbReference>
<dbReference type="Pfam" id="PF03764">
    <property type="entry name" value="EFG_IV"/>
    <property type="match status" value="1"/>
</dbReference>
<dbReference type="Pfam" id="PF00009">
    <property type="entry name" value="GTP_EFTU"/>
    <property type="match status" value="1"/>
</dbReference>
<dbReference type="Pfam" id="PF03144">
    <property type="entry name" value="GTP_EFTU_D2"/>
    <property type="match status" value="1"/>
</dbReference>
<dbReference type="PRINTS" id="PR00315">
    <property type="entry name" value="ELONGATNFCT"/>
</dbReference>
<dbReference type="SMART" id="SM00838">
    <property type="entry name" value="EFG_C"/>
    <property type="match status" value="1"/>
</dbReference>
<dbReference type="SMART" id="SM00889">
    <property type="entry name" value="EFG_IV"/>
    <property type="match status" value="1"/>
</dbReference>
<dbReference type="SUPFAM" id="SSF54980">
    <property type="entry name" value="EF-G C-terminal domain-like"/>
    <property type="match status" value="2"/>
</dbReference>
<dbReference type="SUPFAM" id="SSF52540">
    <property type="entry name" value="P-loop containing nucleoside triphosphate hydrolases"/>
    <property type="match status" value="1"/>
</dbReference>
<dbReference type="SUPFAM" id="SSF54211">
    <property type="entry name" value="Ribosomal protein S5 domain 2-like"/>
    <property type="match status" value="1"/>
</dbReference>
<dbReference type="SUPFAM" id="SSF50447">
    <property type="entry name" value="Translation proteins"/>
    <property type="match status" value="1"/>
</dbReference>
<dbReference type="PROSITE" id="PS00301">
    <property type="entry name" value="G_TR_1"/>
    <property type="match status" value="1"/>
</dbReference>
<dbReference type="PROSITE" id="PS51722">
    <property type="entry name" value="G_TR_2"/>
    <property type="match status" value="1"/>
</dbReference>
<keyword id="KW-0963">Cytoplasm</keyword>
<keyword id="KW-0251">Elongation factor</keyword>
<keyword id="KW-0342">GTP-binding</keyword>
<keyword id="KW-0547">Nucleotide-binding</keyword>
<keyword id="KW-0648">Protein biosynthesis</keyword>
<keyword id="KW-1185">Reference proteome</keyword>
<reference key="1">
    <citation type="journal article" date="2006" name="J. Bacteriol.">
        <title>Comparison of the genome sequence of the poultry pathogen Bordetella avium with those of B. bronchiseptica, B. pertussis, and B. parapertussis reveals extensive diversity in surface structures associated with host interaction.</title>
        <authorList>
            <person name="Sebaihia M."/>
            <person name="Preston A."/>
            <person name="Maskell D.J."/>
            <person name="Kuzmiak H."/>
            <person name="Connell T.D."/>
            <person name="King N.D."/>
            <person name="Orndorff P.E."/>
            <person name="Miyamoto D.M."/>
            <person name="Thomson N.R."/>
            <person name="Harris D."/>
            <person name="Goble A."/>
            <person name="Lord A."/>
            <person name="Murphy L."/>
            <person name="Quail M.A."/>
            <person name="Rutter S."/>
            <person name="Squares R."/>
            <person name="Squares S."/>
            <person name="Woodward J."/>
            <person name="Parkhill J."/>
            <person name="Temple L.M."/>
        </authorList>
    </citation>
    <scope>NUCLEOTIDE SEQUENCE [LARGE SCALE GENOMIC DNA]</scope>
    <source>
        <strain>197N</strain>
    </source>
</reference>
<organism>
    <name type="scientific">Bordetella avium (strain 197N)</name>
    <dbReference type="NCBI Taxonomy" id="360910"/>
    <lineage>
        <taxon>Bacteria</taxon>
        <taxon>Pseudomonadati</taxon>
        <taxon>Pseudomonadota</taxon>
        <taxon>Betaproteobacteria</taxon>
        <taxon>Burkholderiales</taxon>
        <taxon>Alcaligenaceae</taxon>
        <taxon>Bordetella</taxon>
    </lineage>
</organism>
<feature type="chain" id="PRO_0000263428" description="Elongation factor G 1">
    <location>
        <begin position="1"/>
        <end position="700"/>
    </location>
</feature>
<feature type="domain" description="tr-type G">
    <location>
        <begin position="8"/>
        <end position="290"/>
    </location>
</feature>
<feature type="binding site" evidence="1">
    <location>
        <begin position="17"/>
        <end position="24"/>
    </location>
    <ligand>
        <name>GTP</name>
        <dbReference type="ChEBI" id="CHEBI:37565"/>
    </ligand>
</feature>
<feature type="binding site" evidence="1">
    <location>
        <begin position="88"/>
        <end position="92"/>
    </location>
    <ligand>
        <name>GTP</name>
        <dbReference type="ChEBI" id="CHEBI:37565"/>
    </ligand>
</feature>
<feature type="binding site" evidence="1">
    <location>
        <begin position="142"/>
        <end position="145"/>
    </location>
    <ligand>
        <name>GTP</name>
        <dbReference type="ChEBI" id="CHEBI:37565"/>
    </ligand>
</feature>
<accession>Q2L2H1</accession>
<evidence type="ECO:0000255" key="1">
    <source>
        <dbReference type="HAMAP-Rule" id="MF_00054"/>
    </source>
</evidence>
<gene>
    <name evidence="1" type="primary">fusA1</name>
    <name type="ordered locus">BAV0022</name>
</gene>
<proteinExistence type="inferred from homology"/>
<protein>
    <recommendedName>
        <fullName evidence="1">Elongation factor G 1</fullName>
        <shortName evidence="1">EF-G 1</shortName>
    </recommendedName>
</protein>
<sequence length="700" mass="77128">MARKTPIERYRNIGISAHIDAGKTTTTERILFYTGVNHKIGEVHDGAATMDWMEQEQERGITITSAATTAFWRGMAGNFPEHRINIIDTPGHVDFTIEVERSMRVLDGACMVYCAVGGVQPQSETVWRQANKYGVPRLAFVNKMDRTGANFFKVYEQLRTRLRANPVPIVIPIGAEDTFTGVIDLVKMKAIIWDEASQGTKFEYADIPAELQASAEEWREKLVEAAAESSEELMNKYLETGTLEEAEINAAIRQRTIAGEIHPMLCGTAFKNKGVQRMLDAVIEYLPSPIDIPPVDGTDDDGNEVQRRADDSEKFSALAFKLMSDPFVGQLTFVRVYSGVLKSGDTVYNPIKGKKERIGRILQMHANNREEIKEVLAGDIAAVVGLKDVTTGETLCDIDAHVTLERMEFPEPVISQAVEPKSKADQEKMGLALSRLAQEDPSFRVRSDEESGQTIISGMGELHLEILVDRMKREFGVEANVGKPQVAYRETIRKTCDEVEGKFVKQSGGRGQYGHVVLKVEPLAPGGGYEFVDAIKGGVVPREYIPAVDKGIQETLPAGILAGYPVVDVKVTLFFGSYHDVDSNENAFKMAGSMAFKEGMRKASPVLLEPMMAVEVETPEDYAGGVMGDLSSRRGMVQGMDDMVGGGKIIKAEVPLAEMFGYATNLRSLTQGRATYTMEFKHYSEAPKNVADEVIAARGK</sequence>